<protein>
    <recommendedName>
        <fullName evidence="1">DnaA initiator-associating protein DiaA</fullName>
    </recommendedName>
</protein>
<feature type="chain" id="PRO_1000065552" description="DnaA initiator-associating protein DiaA">
    <location>
        <begin position="1"/>
        <end position="196"/>
    </location>
</feature>
<feature type="domain" description="SIS" evidence="1">
    <location>
        <begin position="34"/>
        <end position="196"/>
    </location>
</feature>
<proteinExistence type="inferred from homology"/>
<comment type="function">
    <text evidence="1">Required for the timely initiation of chromosomal replication via direct interactions with the DnaA initiator protein.</text>
</comment>
<comment type="subunit">
    <text evidence="1">Homotetramer; dimer of dimers.</text>
</comment>
<comment type="similarity">
    <text evidence="1">Belongs to the SIS family. DiaA subfamily.</text>
</comment>
<sequence length="196" mass="21106">MQERIKACFTESIQTQIAAAEALPDAISRAAMTLVQSLLNGNKILCCGNGTSAANAQHFAASMINRFETERPSLPAIALNTDNVVLTAIANDRLHDEVYAKQVRALGHAGDVLLAISTRGNSRDIVKAVEAAVTRDMTIVALTGYDGGELAGLLGPQDVEIRIPSHRSARIQEMHMLTVNCLCDLIDNTLFPHQDD</sequence>
<gene>
    <name evidence="1" type="primary">diaA</name>
    <name type="ordered locus">SSON_3295</name>
</gene>
<dbReference type="EMBL" id="CP000038">
    <property type="protein sequence ID" value="AAZ89870.1"/>
    <property type="molecule type" value="Genomic_DNA"/>
</dbReference>
<dbReference type="RefSeq" id="WP_001158034.1">
    <property type="nucleotide sequence ID" value="NC_007384.1"/>
</dbReference>
<dbReference type="SMR" id="Q3YX92"/>
<dbReference type="GeneID" id="93778835"/>
<dbReference type="KEGG" id="ssn:SSON_3295"/>
<dbReference type="HOGENOM" id="CLU_080999_3_1_6"/>
<dbReference type="Proteomes" id="UP000002529">
    <property type="component" value="Chromosome"/>
</dbReference>
<dbReference type="GO" id="GO:0097367">
    <property type="term" value="F:carbohydrate derivative binding"/>
    <property type="evidence" value="ECO:0007669"/>
    <property type="project" value="InterPro"/>
</dbReference>
<dbReference type="GO" id="GO:1901135">
    <property type="term" value="P:carbohydrate derivative metabolic process"/>
    <property type="evidence" value="ECO:0007669"/>
    <property type="project" value="InterPro"/>
</dbReference>
<dbReference type="GO" id="GO:0006260">
    <property type="term" value="P:DNA replication"/>
    <property type="evidence" value="ECO:0007669"/>
    <property type="project" value="UniProtKB-UniRule"/>
</dbReference>
<dbReference type="CDD" id="cd05006">
    <property type="entry name" value="SIS_GmhA"/>
    <property type="match status" value="1"/>
</dbReference>
<dbReference type="FunFam" id="3.40.50.10490:FF:000006">
    <property type="entry name" value="DnaA initiator-associating protein DiaA"/>
    <property type="match status" value="1"/>
</dbReference>
<dbReference type="Gene3D" id="3.40.50.10490">
    <property type="entry name" value="Glucose-6-phosphate isomerase like protein, domain 1"/>
    <property type="match status" value="1"/>
</dbReference>
<dbReference type="HAMAP" id="MF_01157">
    <property type="entry name" value="SIS_DiaA"/>
    <property type="match status" value="1"/>
</dbReference>
<dbReference type="InterPro" id="IPR023070">
    <property type="entry name" value="DiaA"/>
</dbReference>
<dbReference type="InterPro" id="IPR035461">
    <property type="entry name" value="GmhA/DiaA"/>
</dbReference>
<dbReference type="InterPro" id="IPR001347">
    <property type="entry name" value="SIS_dom"/>
</dbReference>
<dbReference type="InterPro" id="IPR046348">
    <property type="entry name" value="SIS_dom_sf"/>
</dbReference>
<dbReference type="InterPro" id="IPR050099">
    <property type="entry name" value="SIS_GmhA/DiaA_subfam"/>
</dbReference>
<dbReference type="NCBIfam" id="NF008138">
    <property type="entry name" value="PRK10886.1"/>
    <property type="match status" value="1"/>
</dbReference>
<dbReference type="NCBIfam" id="NF010546">
    <property type="entry name" value="PRK13936.1"/>
    <property type="match status" value="1"/>
</dbReference>
<dbReference type="PANTHER" id="PTHR30390:SF6">
    <property type="entry name" value="DNAA INITIATOR-ASSOCIATING PROTEIN DIAA"/>
    <property type="match status" value="1"/>
</dbReference>
<dbReference type="PANTHER" id="PTHR30390">
    <property type="entry name" value="SEDOHEPTULOSE 7-PHOSPHATE ISOMERASE / DNAA INITIATOR-ASSOCIATING FACTOR FOR REPLICATION INITIATION"/>
    <property type="match status" value="1"/>
</dbReference>
<dbReference type="Pfam" id="PF13580">
    <property type="entry name" value="SIS_2"/>
    <property type="match status" value="1"/>
</dbReference>
<dbReference type="SUPFAM" id="SSF53697">
    <property type="entry name" value="SIS domain"/>
    <property type="match status" value="1"/>
</dbReference>
<dbReference type="PROSITE" id="PS51464">
    <property type="entry name" value="SIS"/>
    <property type="match status" value="1"/>
</dbReference>
<name>DIAA_SHISS</name>
<keyword id="KW-0235">DNA replication</keyword>
<keyword id="KW-1185">Reference proteome</keyword>
<organism>
    <name type="scientific">Shigella sonnei (strain Ss046)</name>
    <dbReference type="NCBI Taxonomy" id="300269"/>
    <lineage>
        <taxon>Bacteria</taxon>
        <taxon>Pseudomonadati</taxon>
        <taxon>Pseudomonadota</taxon>
        <taxon>Gammaproteobacteria</taxon>
        <taxon>Enterobacterales</taxon>
        <taxon>Enterobacteriaceae</taxon>
        <taxon>Shigella</taxon>
    </lineage>
</organism>
<reference key="1">
    <citation type="journal article" date="2005" name="Nucleic Acids Res.">
        <title>Genome dynamics and diversity of Shigella species, the etiologic agents of bacillary dysentery.</title>
        <authorList>
            <person name="Yang F."/>
            <person name="Yang J."/>
            <person name="Zhang X."/>
            <person name="Chen L."/>
            <person name="Jiang Y."/>
            <person name="Yan Y."/>
            <person name="Tang X."/>
            <person name="Wang J."/>
            <person name="Xiong Z."/>
            <person name="Dong J."/>
            <person name="Xue Y."/>
            <person name="Zhu Y."/>
            <person name="Xu X."/>
            <person name="Sun L."/>
            <person name="Chen S."/>
            <person name="Nie H."/>
            <person name="Peng J."/>
            <person name="Xu J."/>
            <person name="Wang Y."/>
            <person name="Yuan Z."/>
            <person name="Wen Y."/>
            <person name="Yao Z."/>
            <person name="Shen Y."/>
            <person name="Qiang B."/>
            <person name="Hou Y."/>
            <person name="Yu J."/>
            <person name="Jin Q."/>
        </authorList>
    </citation>
    <scope>NUCLEOTIDE SEQUENCE [LARGE SCALE GENOMIC DNA]</scope>
    <source>
        <strain>Ss046</strain>
    </source>
</reference>
<evidence type="ECO:0000255" key="1">
    <source>
        <dbReference type="HAMAP-Rule" id="MF_01157"/>
    </source>
</evidence>
<accession>Q3YX92</accession>